<organism>
    <name type="scientific">Methanothermobacter thermautotrophicus (strain ATCC 29096 / DSM 1053 / JCM 10044 / NBRC 100330 / Delta H)</name>
    <name type="common">Methanobacterium thermoautotrophicum</name>
    <dbReference type="NCBI Taxonomy" id="187420"/>
    <lineage>
        <taxon>Archaea</taxon>
        <taxon>Methanobacteriati</taxon>
        <taxon>Methanobacteriota</taxon>
        <taxon>Methanomada group</taxon>
        <taxon>Methanobacteria</taxon>
        <taxon>Methanobacteriales</taxon>
        <taxon>Methanobacteriaceae</taxon>
        <taxon>Methanothermobacter</taxon>
    </lineage>
</organism>
<sequence length="258" mass="28605">MEEKAKMRRLSTWKLKLRMFLATVLLFGLIYAILMVVGSILGLGGPLFYALLGFGVIFLQYLISPKIVELTMNVHYVSEAEAPRLHAMVDELARRAGIPKPMVGIAEIALPNAFAFGRTKADGRVCVTRGILNLLDEEELRAVLGHEISHIKHSDMIVMTLVSAVPLICYYIFWSTVFSRDDEANLVGIAALIAYFIGQLIVLFISRTREYYADQGSVEIGGQPHKLASALYKLVLRLSPVQQGRPETGRGCQGLLPE</sequence>
<name>HTPX_METTH</name>
<evidence type="ECO:0000255" key="1">
    <source>
        <dbReference type="HAMAP-Rule" id="MF_00188"/>
    </source>
</evidence>
<keyword id="KW-1003">Cell membrane</keyword>
<keyword id="KW-0378">Hydrolase</keyword>
<keyword id="KW-0472">Membrane</keyword>
<keyword id="KW-0479">Metal-binding</keyword>
<keyword id="KW-0482">Metalloprotease</keyword>
<keyword id="KW-0645">Protease</keyword>
<keyword id="KW-1185">Reference proteome</keyword>
<keyword id="KW-0812">Transmembrane</keyword>
<keyword id="KW-1133">Transmembrane helix</keyword>
<keyword id="KW-0862">Zinc</keyword>
<feature type="chain" id="PRO_0000138921" description="Protease HtpX homolog">
    <location>
        <begin position="1"/>
        <end position="258"/>
    </location>
</feature>
<feature type="transmembrane region" description="Helical" evidence="1">
    <location>
        <begin position="24"/>
        <end position="44"/>
    </location>
</feature>
<feature type="transmembrane region" description="Helical" evidence="1">
    <location>
        <begin position="45"/>
        <end position="65"/>
    </location>
</feature>
<feature type="transmembrane region" description="Helical" evidence="1">
    <location>
        <begin position="157"/>
        <end position="177"/>
    </location>
</feature>
<feature type="transmembrane region" description="Helical" evidence="1">
    <location>
        <begin position="186"/>
        <end position="206"/>
    </location>
</feature>
<feature type="active site" evidence="1">
    <location>
        <position position="147"/>
    </location>
</feature>
<feature type="binding site" evidence="1">
    <location>
        <position position="146"/>
    </location>
    <ligand>
        <name>Zn(2+)</name>
        <dbReference type="ChEBI" id="CHEBI:29105"/>
        <note>catalytic</note>
    </ligand>
</feature>
<feature type="binding site" evidence="1">
    <location>
        <position position="150"/>
    </location>
    <ligand>
        <name>Zn(2+)</name>
        <dbReference type="ChEBI" id="CHEBI:29105"/>
        <note>catalytic</note>
    </ligand>
</feature>
<feature type="binding site" evidence="1">
    <location>
        <position position="210"/>
    </location>
    <ligand>
        <name>Zn(2+)</name>
        <dbReference type="ChEBI" id="CHEBI:29105"/>
        <note>catalytic</note>
    </ligand>
</feature>
<comment type="cofactor">
    <cofactor evidence="1">
        <name>Zn(2+)</name>
        <dbReference type="ChEBI" id="CHEBI:29105"/>
    </cofactor>
    <text evidence="1">Binds 1 zinc ion per subunit.</text>
</comment>
<comment type="subcellular location">
    <subcellularLocation>
        <location evidence="1">Cell membrane</location>
        <topology evidence="1">Multi-pass membrane protein</topology>
    </subcellularLocation>
</comment>
<comment type="similarity">
    <text evidence="1">Belongs to the peptidase M48B family.</text>
</comment>
<accession>O26669</accession>
<gene>
    <name evidence="1" type="primary">htpX</name>
    <name type="ordered locus">MTH_569</name>
</gene>
<reference key="1">
    <citation type="journal article" date="1997" name="J. Bacteriol.">
        <title>Complete genome sequence of Methanobacterium thermoautotrophicum deltaH: functional analysis and comparative genomics.</title>
        <authorList>
            <person name="Smith D.R."/>
            <person name="Doucette-Stamm L.A."/>
            <person name="Deloughery C."/>
            <person name="Lee H.-M."/>
            <person name="Dubois J."/>
            <person name="Aldredge T."/>
            <person name="Bashirzadeh R."/>
            <person name="Blakely D."/>
            <person name="Cook R."/>
            <person name="Gilbert K."/>
            <person name="Harrison D."/>
            <person name="Hoang L."/>
            <person name="Keagle P."/>
            <person name="Lumm W."/>
            <person name="Pothier B."/>
            <person name="Qiu D."/>
            <person name="Spadafora R."/>
            <person name="Vicare R."/>
            <person name="Wang Y."/>
            <person name="Wierzbowski J."/>
            <person name="Gibson R."/>
            <person name="Jiwani N."/>
            <person name="Caruso A."/>
            <person name="Bush D."/>
            <person name="Safer H."/>
            <person name="Patwell D."/>
            <person name="Prabhakar S."/>
            <person name="McDougall S."/>
            <person name="Shimer G."/>
            <person name="Goyal A."/>
            <person name="Pietrovski S."/>
            <person name="Church G.M."/>
            <person name="Daniels C.J."/>
            <person name="Mao J.-I."/>
            <person name="Rice P."/>
            <person name="Noelling J."/>
            <person name="Reeve J.N."/>
        </authorList>
    </citation>
    <scope>NUCLEOTIDE SEQUENCE [LARGE SCALE GENOMIC DNA]</scope>
    <source>
        <strain>ATCC 29096 / DSM 1053 / JCM 10044 / NBRC 100330 / Delta H</strain>
    </source>
</reference>
<protein>
    <recommendedName>
        <fullName evidence="1">Protease HtpX homolog</fullName>
        <ecNumber evidence="1">3.4.24.-</ecNumber>
    </recommendedName>
</protein>
<proteinExistence type="inferred from homology"/>
<dbReference type="EC" id="3.4.24.-" evidence="1"/>
<dbReference type="EMBL" id="AE000666">
    <property type="protein sequence ID" value="AAB85075.1"/>
    <property type="molecule type" value="Genomic_DNA"/>
</dbReference>
<dbReference type="PIR" id="C69175">
    <property type="entry name" value="C69175"/>
</dbReference>
<dbReference type="SMR" id="O26669"/>
<dbReference type="FunCoup" id="O26669">
    <property type="interactions" value="2"/>
</dbReference>
<dbReference type="STRING" id="187420.MTH_569"/>
<dbReference type="PaxDb" id="187420-MTH_569"/>
<dbReference type="EnsemblBacteria" id="AAB85075">
    <property type="protein sequence ID" value="AAB85075"/>
    <property type="gene ID" value="MTH_569"/>
</dbReference>
<dbReference type="KEGG" id="mth:MTH_569"/>
<dbReference type="PATRIC" id="fig|187420.15.peg.548"/>
<dbReference type="HOGENOM" id="CLU_042266_4_0_2"/>
<dbReference type="InParanoid" id="O26669"/>
<dbReference type="Proteomes" id="UP000005223">
    <property type="component" value="Chromosome"/>
</dbReference>
<dbReference type="GO" id="GO:0005886">
    <property type="term" value="C:plasma membrane"/>
    <property type="evidence" value="ECO:0007669"/>
    <property type="project" value="UniProtKB-SubCell"/>
</dbReference>
<dbReference type="GO" id="GO:0004222">
    <property type="term" value="F:metalloendopeptidase activity"/>
    <property type="evidence" value="ECO:0007669"/>
    <property type="project" value="UniProtKB-UniRule"/>
</dbReference>
<dbReference type="GO" id="GO:0008270">
    <property type="term" value="F:zinc ion binding"/>
    <property type="evidence" value="ECO:0007669"/>
    <property type="project" value="UniProtKB-UniRule"/>
</dbReference>
<dbReference type="GO" id="GO:0006508">
    <property type="term" value="P:proteolysis"/>
    <property type="evidence" value="ECO:0007669"/>
    <property type="project" value="UniProtKB-KW"/>
</dbReference>
<dbReference type="CDD" id="cd07338">
    <property type="entry name" value="M48B_HtpX_like"/>
    <property type="match status" value="1"/>
</dbReference>
<dbReference type="Gene3D" id="3.30.2010.10">
    <property type="entry name" value="Metalloproteases ('zincins'), catalytic domain"/>
    <property type="match status" value="1"/>
</dbReference>
<dbReference type="HAMAP" id="MF_00188">
    <property type="entry name" value="Pept_M48_protease_HtpX"/>
    <property type="match status" value="1"/>
</dbReference>
<dbReference type="InterPro" id="IPR050083">
    <property type="entry name" value="HtpX_protease"/>
</dbReference>
<dbReference type="InterPro" id="IPR022919">
    <property type="entry name" value="Pept_M48_protease_HtpX"/>
</dbReference>
<dbReference type="InterPro" id="IPR001915">
    <property type="entry name" value="Peptidase_M48"/>
</dbReference>
<dbReference type="PANTHER" id="PTHR43221">
    <property type="entry name" value="PROTEASE HTPX"/>
    <property type="match status" value="1"/>
</dbReference>
<dbReference type="PANTHER" id="PTHR43221:SF2">
    <property type="entry name" value="PROTEASE HTPX HOMOLOG"/>
    <property type="match status" value="1"/>
</dbReference>
<dbReference type="Pfam" id="PF01435">
    <property type="entry name" value="Peptidase_M48"/>
    <property type="match status" value="1"/>
</dbReference>